<feature type="chain" id="PRO_0000434792" description="Dapdiamide A synthase">
    <location>
        <begin position="1"/>
        <end position="424"/>
    </location>
</feature>
<feature type="domain" description="ATP-grasp" evidence="1">
    <location>
        <begin position="120"/>
        <end position="318"/>
    </location>
</feature>
<feature type="binding site" evidence="1">
    <location>
        <begin position="147"/>
        <end position="209"/>
    </location>
    <ligand>
        <name>ATP</name>
        <dbReference type="ChEBI" id="CHEBI:30616"/>
    </ligand>
</feature>
<feature type="binding site" evidence="1">
    <location>
        <position position="275"/>
    </location>
    <ligand>
        <name>Mg(2+)</name>
        <dbReference type="ChEBI" id="CHEBI:18420"/>
    </ligand>
</feature>
<feature type="binding site" evidence="1">
    <location>
        <position position="287"/>
    </location>
    <ligand>
        <name>Mg(2+)</name>
        <dbReference type="ChEBI" id="CHEBI:18420"/>
    </ligand>
</feature>
<evidence type="ECO:0000255" key="1">
    <source>
        <dbReference type="PROSITE-ProRule" id="PRU00409"/>
    </source>
</evidence>
<evidence type="ECO:0000269" key="2">
    <source>
    </source>
</evidence>
<evidence type="ECO:0000269" key="3">
    <source>
    </source>
</evidence>
<evidence type="ECO:0000303" key="4">
    <source>
    </source>
</evidence>
<evidence type="ECO:0000305" key="5"/>
<evidence type="ECO:0000312" key="6">
    <source>
        <dbReference type="EMBL" id="AFJ97210.1"/>
    </source>
</evidence>
<protein>
    <recommendedName>
        <fullName evidence="5">Dapdiamide A synthase</fullName>
        <ecNumber evidence="2 3">6.3.2.47</ecNumber>
    </recommendedName>
    <alternativeName>
        <fullName evidence="4">ATP-dependent N-fumaramoyl-DAP-amino acid ligase</fullName>
    </alternativeName>
</protein>
<accession>E2JA31</accession>
<organism>
    <name type="scientific">Enterobacter agglomerans</name>
    <name type="common">Erwinia herbicola</name>
    <name type="synonym">Pantoea agglomerans</name>
    <dbReference type="NCBI Taxonomy" id="549"/>
    <lineage>
        <taxon>Bacteria</taxon>
        <taxon>Pseudomonadati</taxon>
        <taxon>Pseudomonadota</taxon>
        <taxon>Gammaproteobacteria</taxon>
        <taxon>Enterobacterales</taxon>
        <taxon>Erwiniaceae</taxon>
        <taxon>Pantoea</taxon>
        <taxon>Pantoea agglomerans group</taxon>
    </lineage>
</organism>
<name>DDAF_ENTAG</name>
<comment type="function">
    <text evidence="2 3">Involved in dapdiamide antibiotics biosynthesis (PubMed:19807062, PubMed:20945916). Ligates N-beta-fumaramoyl-DAP and valine, isoleucine or leucine to form dapdiamides A, B or C, respectively (PubMed:19807062). Also ligates N-beta-epoxysuccinamoyl-DAP and valine to form dapdiamide E (PubMed:20945916).</text>
</comment>
<comment type="catalytic activity">
    <reaction evidence="3">
        <text>3-[[[(2R,3R)-3-carboxyoxiran-2-yl]carbonyl]amino]-L-alanine + L-valine + ATP = dapdiamide E + ADP + phosphate + H(+)</text>
        <dbReference type="Rhea" id="RHEA:45080"/>
        <dbReference type="ChEBI" id="CHEBI:15378"/>
        <dbReference type="ChEBI" id="CHEBI:30616"/>
        <dbReference type="ChEBI" id="CHEBI:43474"/>
        <dbReference type="ChEBI" id="CHEBI:57762"/>
        <dbReference type="ChEBI" id="CHEBI:84912"/>
        <dbReference type="ChEBI" id="CHEBI:84913"/>
        <dbReference type="ChEBI" id="CHEBI:456216"/>
        <dbReference type="EC" id="6.3.2.47"/>
    </reaction>
</comment>
<comment type="catalytic activity">
    <reaction evidence="2">
        <text>N(3)-fumaramoyl-(S)-2,3-diaminopropanoate + L-valine + ATP = dapdiamide A + ADP + phosphate + H(+)</text>
        <dbReference type="Rhea" id="RHEA:44344"/>
        <dbReference type="ChEBI" id="CHEBI:15378"/>
        <dbReference type="ChEBI" id="CHEBI:30616"/>
        <dbReference type="ChEBI" id="CHEBI:43474"/>
        <dbReference type="ChEBI" id="CHEBI:57762"/>
        <dbReference type="ChEBI" id="CHEBI:84320"/>
        <dbReference type="ChEBI" id="CHEBI:84331"/>
        <dbReference type="ChEBI" id="CHEBI:456216"/>
        <dbReference type="EC" id="6.3.2.47"/>
    </reaction>
</comment>
<comment type="catalytic activity">
    <reaction evidence="2">
        <text>N(3)-fumaramoyl-(S)-2,3-diaminopropanoate + L-isoleucine + ATP = dapdiamide B + ADP + phosphate + H(+)</text>
        <dbReference type="Rhea" id="RHEA:44348"/>
        <dbReference type="ChEBI" id="CHEBI:15378"/>
        <dbReference type="ChEBI" id="CHEBI:30616"/>
        <dbReference type="ChEBI" id="CHEBI:43474"/>
        <dbReference type="ChEBI" id="CHEBI:58045"/>
        <dbReference type="ChEBI" id="CHEBI:84321"/>
        <dbReference type="ChEBI" id="CHEBI:84331"/>
        <dbReference type="ChEBI" id="CHEBI:456216"/>
        <dbReference type="EC" id="6.3.2.47"/>
    </reaction>
</comment>
<comment type="catalytic activity">
    <reaction evidence="2">
        <text>N(3)-fumaramoyl-(S)-2,3-diaminopropanoate + L-leucine + ATP = dapdiamide C + ADP + phosphate + H(+)</text>
        <dbReference type="Rhea" id="RHEA:44352"/>
        <dbReference type="ChEBI" id="CHEBI:15378"/>
        <dbReference type="ChEBI" id="CHEBI:30616"/>
        <dbReference type="ChEBI" id="CHEBI:43474"/>
        <dbReference type="ChEBI" id="CHEBI:57427"/>
        <dbReference type="ChEBI" id="CHEBI:84322"/>
        <dbReference type="ChEBI" id="CHEBI:84331"/>
        <dbReference type="ChEBI" id="CHEBI:456216"/>
        <dbReference type="EC" id="6.3.2.47"/>
    </reaction>
</comment>
<comment type="cofactor">
    <cofactor evidence="1">
        <name>Mg(2+)</name>
        <dbReference type="ChEBI" id="CHEBI:18420"/>
    </cofactor>
    <cofactor evidence="1">
        <name>Mn(2+)</name>
        <dbReference type="ChEBI" id="CHEBI:29035"/>
    </cofactor>
    <text evidence="1">Binds 1 magnesium or manganese ion per subunit.</text>
</comment>
<comment type="biophysicochemical properties">
    <kinetics>
        <KM evidence="2">0.26 mM for valine</KM>
        <KM evidence="2">0.83 mM for isoleucine</KM>
        <KM evidence="2">7.82 mM for leucine</KM>
        <KM evidence="3">72 uM for N-beta-fumaramoyl-DAP</KM>
        <KM evidence="3">53 uM for N-beta-epoxysuccinamoyl-DAP</KM>
        <text evidence="2 3">kcat is 8.1 min(-1) with valine as substrate. kcat is 9.5 min(-1) with isoleucine as substrate. kcat is 11.2 min(-1) with leucine as substrate (PubMed:19807062). kcat is 21 min(-1) with N-beta-fumaramoyl-DAP as substrate. kcat is 181 min(-1) with N-beta-epoxysuccinamoyl-DAP as substrate (PubMed:20945916).</text>
    </kinetics>
</comment>
<comment type="pathway">
    <text evidence="2 3">Antibiotic biosynthesis.</text>
</comment>
<sequence>MSILNNKEVIVIIDAWSGGKHLIPAFQALGYFCLHVQSTFLPEVFIADNQLAIARSDRHIVHDGNIETLLSQLQPYTIKAILAGSEGAVGLADCLNDALELTFSNQFELSAARRNKYLMQEQLALKGVASINQQLAGHSDELKQWLAGHAHWPVVLKPIQSAGTDGVFICHDLAQALQAFEAILAKKDFFGSPNREVLCQEFLAGEEFVVNGIACQGEYFFTELWQSKKQQRNGFPVYETQYLHYQNDAGFDVLTAYTVQVCQTLGINNGAFHAEVMMTSGGPVLIEIGARVAGGADPYIIEECLGHSQISKLAQAVLHPAKFLQECRRQHDFSGHRRAAYVYMISPSPGRVQVSPEEKFIKIDGVISINYHYAPGDIQQETCDLLSSPGVIIAIRDNPALLKQTIAEIRDVEADFYHLGLIDE</sequence>
<proteinExistence type="evidence at protein level"/>
<keyword id="KW-0045">Antibiotic biosynthesis</keyword>
<keyword id="KW-0067">ATP-binding</keyword>
<keyword id="KW-0436">Ligase</keyword>
<keyword id="KW-0460">Magnesium</keyword>
<keyword id="KW-0464">Manganese</keyword>
<keyword id="KW-0479">Metal-binding</keyword>
<keyword id="KW-0547">Nucleotide-binding</keyword>
<dbReference type="EC" id="6.3.2.47" evidence="2 3"/>
<dbReference type="EMBL" id="HQ130277">
    <property type="protein sequence ID" value="ADN39488.1"/>
    <property type="molecule type" value="Genomic_DNA"/>
</dbReference>
<dbReference type="EMBL" id="JQ901494">
    <property type="protein sequence ID" value="AFJ97210.1"/>
    <property type="molecule type" value="Genomic_DNA"/>
</dbReference>
<dbReference type="RefSeq" id="WP_033781244.1">
    <property type="nucleotide sequence ID" value="NZ_JPOT02000004.1"/>
</dbReference>
<dbReference type="SMR" id="E2JA31"/>
<dbReference type="KEGG" id="ag:ADN39488"/>
<dbReference type="BioCyc" id="MetaCyc:MONOMER-19476"/>
<dbReference type="BRENDA" id="6.3.2.47">
    <property type="organism ID" value="2084"/>
</dbReference>
<dbReference type="BRENDA" id="6.3.2.B15">
    <property type="organism ID" value="2084"/>
</dbReference>
<dbReference type="GO" id="GO:0005524">
    <property type="term" value="F:ATP binding"/>
    <property type="evidence" value="ECO:0007669"/>
    <property type="project" value="UniProtKB-KW"/>
</dbReference>
<dbReference type="GO" id="GO:0016874">
    <property type="term" value="F:ligase activity"/>
    <property type="evidence" value="ECO:0007669"/>
    <property type="project" value="UniProtKB-KW"/>
</dbReference>
<dbReference type="GO" id="GO:0046872">
    <property type="term" value="F:metal ion binding"/>
    <property type="evidence" value="ECO:0007669"/>
    <property type="project" value="UniProtKB-KW"/>
</dbReference>
<dbReference type="GO" id="GO:0017000">
    <property type="term" value="P:antibiotic biosynthetic process"/>
    <property type="evidence" value="ECO:0007669"/>
    <property type="project" value="UniProtKB-KW"/>
</dbReference>
<dbReference type="Gene3D" id="3.30.470.20">
    <property type="entry name" value="ATP-grasp fold, B domain"/>
    <property type="match status" value="1"/>
</dbReference>
<dbReference type="InterPro" id="IPR052032">
    <property type="entry name" value="ATP-dep_AA_Ligase"/>
</dbReference>
<dbReference type="InterPro" id="IPR011761">
    <property type="entry name" value="ATP-grasp"/>
</dbReference>
<dbReference type="InterPro" id="IPR053699">
    <property type="entry name" value="Dapdiamide_Synthase"/>
</dbReference>
<dbReference type="NCBIfam" id="NF041595">
    <property type="entry name" value="dap_A_syn_DdaF"/>
    <property type="match status" value="1"/>
</dbReference>
<dbReference type="NCBIfam" id="NF005543">
    <property type="entry name" value="PRK07206.1"/>
    <property type="match status" value="1"/>
</dbReference>
<dbReference type="PANTHER" id="PTHR43585:SF2">
    <property type="entry name" value="ATP-GRASP ENZYME FSQD"/>
    <property type="match status" value="1"/>
</dbReference>
<dbReference type="PANTHER" id="PTHR43585">
    <property type="entry name" value="FUMIPYRROLE BIOSYNTHESIS PROTEIN C"/>
    <property type="match status" value="1"/>
</dbReference>
<dbReference type="Pfam" id="PF13535">
    <property type="entry name" value="ATP-grasp_4"/>
    <property type="match status" value="1"/>
</dbReference>
<dbReference type="SUPFAM" id="SSF56059">
    <property type="entry name" value="Glutathione synthetase ATP-binding domain-like"/>
    <property type="match status" value="1"/>
</dbReference>
<dbReference type="PROSITE" id="PS50975">
    <property type="entry name" value="ATP_GRASP"/>
    <property type="match status" value="1"/>
</dbReference>
<reference key="1">
    <citation type="journal article" date="2010" name="J. Am. Chem. Soc.">
        <title>The nonribosomal peptide synthetase enzyme DdaD tethers N(beta)-fumaramoyl-l-2,3-diaminopropionate for Fe(II)/alpha-ketoglutarate-dependent epoxidation by DdaC during dapdiamide antibiotic biosynthesis.</title>
        <authorList>
            <person name="Hollenhorst M.A."/>
            <person name="Bumpus S.B."/>
            <person name="Matthews M.L."/>
            <person name="Bollinger J.M. Jr."/>
            <person name="Kelleher N.L."/>
            <person name="Walsh C.T."/>
        </authorList>
    </citation>
    <scope>NUCLEOTIDE SEQUENCE [GENOMIC DNA]</scope>
    <scope>FUNCTION</scope>
    <scope>CATALYTIC ACTIVITY</scope>
    <scope>BIOPHYSICOCHEMICAL PROPERTIES</scope>
    <scope>PATHWAY</scope>
    <source>
        <strain>CU0119</strain>
    </source>
</reference>
<reference key="2">
    <citation type="journal article" date="2012" name="MicrobiologyOpen">
        <title>Assessment of the relevance of the antibiotic 2-amino-3-(oxirane-2,3-dicarboxamido)-propanoyl-valine from Pantoea agglomerans biological control strains against bacterial plant pathogens.</title>
        <authorList>
            <person name="Sammer U.F."/>
            <person name="Reiher K."/>
            <person name="Spiteller D."/>
            <person name="Wensing A."/>
            <person name="Volksch B."/>
        </authorList>
    </citation>
    <scope>NUCLEOTIDE SEQUENCE [GENOMIC DNA]</scope>
    <source>
        <strain>48b/90</strain>
    </source>
</reference>
<reference key="3">
    <citation type="journal article" date="2009" name="Biochemistry">
        <title>The ATP-dependent amide ligases DdaG and DdaF assemble the fumaramoyl-dipeptide scaffold of the dapdiamide antibiotics.</title>
        <authorList>
            <person name="Hollenhorst M.A."/>
            <person name="Clardy J."/>
            <person name="Walsh C.T."/>
        </authorList>
    </citation>
    <scope>FUNCTION</scope>
    <scope>CATALYTIC ACTIVITY</scope>
    <scope>BIOPHYSICOCHEMICAL PROPERTIES</scope>
    <scope>PATHWAY</scope>
    <source>
        <strain>CU0119</strain>
    </source>
</reference>
<gene>
    <name evidence="4" type="primary">ddaF</name>
    <name evidence="6" type="synonym">apvF</name>
</gene>